<proteinExistence type="inferred from homology"/>
<accession>P42275</accession>
<organism>
    <name type="scientific">Proteus mirabilis</name>
    <dbReference type="NCBI Taxonomy" id="584"/>
    <lineage>
        <taxon>Bacteria</taxon>
        <taxon>Pseudomonadati</taxon>
        <taxon>Pseudomonadota</taxon>
        <taxon>Gammaproteobacteria</taxon>
        <taxon>Enterobacterales</taxon>
        <taxon>Morganellaceae</taxon>
        <taxon>Proteus</taxon>
    </lineage>
</organism>
<name>RS20_PROMI</name>
<comment type="function">
    <text evidence="1">Binds directly to 16S ribosomal RNA.</text>
</comment>
<comment type="similarity">
    <text evidence="2">Belongs to the bacterial ribosomal protein bS20 family.</text>
</comment>
<dbReference type="EMBL" id="U20492">
    <property type="protein sequence ID" value="AAA87000.1"/>
    <property type="molecule type" value="Genomic_DNA"/>
</dbReference>
<dbReference type="PIR" id="S58761">
    <property type="entry name" value="S58761"/>
</dbReference>
<dbReference type="SMR" id="P42275"/>
<dbReference type="STRING" id="584.AOUC001_16030"/>
<dbReference type="GO" id="GO:0005829">
    <property type="term" value="C:cytosol"/>
    <property type="evidence" value="ECO:0007669"/>
    <property type="project" value="TreeGrafter"/>
</dbReference>
<dbReference type="GO" id="GO:0015935">
    <property type="term" value="C:small ribosomal subunit"/>
    <property type="evidence" value="ECO:0007669"/>
    <property type="project" value="TreeGrafter"/>
</dbReference>
<dbReference type="GO" id="GO:0070181">
    <property type="term" value="F:small ribosomal subunit rRNA binding"/>
    <property type="evidence" value="ECO:0007669"/>
    <property type="project" value="TreeGrafter"/>
</dbReference>
<dbReference type="GO" id="GO:0003735">
    <property type="term" value="F:structural constituent of ribosome"/>
    <property type="evidence" value="ECO:0007669"/>
    <property type="project" value="InterPro"/>
</dbReference>
<dbReference type="GO" id="GO:0006412">
    <property type="term" value="P:translation"/>
    <property type="evidence" value="ECO:0007669"/>
    <property type="project" value="InterPro"/>
</dbReference>
<dbReference type="FunFam" id="1.20.58.110:FF:000001">
    <property type="entry name" value="30S ribosomal protein S20"/>
    <property type="match status" value="1"/>
</dbReference>
<dbReference type="Gene3D" id="1.20.58.110">
    <property type="entry name" value="Ribosomal protein S20"/>
    <property type="match status" value="1"/>
</dbReference>
<dbReference type="InterPro" id="IPR002583">
    <property type="entry name" value="Ribosomal_bS20"/>
</dbReference>
<dbReference type="InterPro" id="IPR036510">
    <property type="entry name" value="Ribosomal_bS20_sf"/>
</dbReference>
<dbReference type="NCBIfam" id="TIGR00029">
    <property type="entry name" value="S20"/>
    <property type="match status" value="1"/>
</dbReference>
<dbReference type="PANTHER" id="PTHR33398">
    <property type="entry name" value="30S RIBOSOMAL PROTEIN S20"/>
    <property type="match status" value="1"/>
</dbReference>
<dbReference type="PANTHER" id="PTHR33398:SF1">
    <property type="entry name" value="SMALL RIBOSOMAL SUBUNIT PROTEIN BS20C"/>
    <property type="match status" value="1"/>
</dbReference>
<dbReference type="Pfam" id="PF01649">
    <property type="entry name" value="Ribosomal_S20p"/>
    <property type="match status" value="1"/>
</dbReference>
<dbReference type="SUPFAM" id="SSF46992">
    <property type="entry name" value="Ribosomal protein S20"/>
    <property type="match status" value="1"/>
</dbReference>
<evidence type="ECO:0000250" key="1"/>
<evidence type="ECO:0000305" key="2"/>
<sequence length="72" mass="8233">KRAVQSEKRRQHNASRRSMMRTYIKKVYAAVASGDKEAAQKAFNDMQPIVDRQATKGLIHKNKAARHKANLQ</sequence>
<keyword id="KW-0687">Ribonucleoprotein</keyword>
<keyword id="KW-0689">Ribosomal protein</keyword>
<keyword id="KW-0694">RNA-binding</keyword>
<keyword id="KW-0699">rRNA-binding</keyword>
<reference key="1">
    <citation type="journal article" date="1995" name="Biochim. Biophys. Acta">
        <title>Conserved amino acid residues in the primary structure of ribosomal protein S20 from selected Gram-negative bacteria.</title>
        <authorList>
            <person name="Nemec A."/>
            <person name="Haywood-Farmer A."/>
            <person name="Mackie G.A."/>
        </authorList>
    </citation>
    <scope>NUCLEOTIDE SEQUENCE [GENOMIC DNA]</scope>
</reference>
<protein>
    <recommendedName>
        <fullName evidence="2">Small ribosomal subunit protein bS20</fullName>
    </recommendedName>
    <alternativeName>
        <fullName>30S ribosomal protein S20</fullName>
    </alternativeName>
</protein>
<gene>
    <name type="primary">rpsT</name>
</gene>
<feature type="chain" id="PRO_0000168011" description="Small ribosomal subunit protein bS20">
    <location>
        <begin position="1" status="less than"/>
        <end position="72" status="greater than"/>
    </location>
</feature>
<feature type="non-terminal residue">
    <location>
        <position position="1"/>
    </location>
</feature>
<feature type="non-terminal residue">
    <location>
        <position position="72"/>
    </location>
</feature>